<comment type="function">
    <text evidence="1">The RuvA-RuvB-RuvC complex processes Holliday junction (HJ) DNA during genetic recombination and DNA repair, while the RuvA-RuvB complex plays an important role in the rescue of blocked DNA replication forks via replication fork reversal (RFR). RuvA specifically binds to HJ cruciform DNA, conferring on it an open structure. The RuvB hexamer acts as an ATP-dependent pump, pulling dsDNA into and through the RuvAB complex. HJ branch migration allows RuvC to scan DNA until it finds its consensus sequence, where it cleaves and resolves the cruciform DNA.</text>
</comment>
<comment type="subunit">
    <text evidence="1">Homotetramer. Forms an RuvA(8)-RuvB(12)-Holliday junction (HJ) complex. HJ DNA is sandwiched between 2 RuvA tetramers; dsDNA enters through RuvA and exits via RuvB. An RuvB hexamer assembles on each DNA strand where it exits the tetramer. Each RuvB hexamer is contacted by two RuvA subunits (via domain III) on 2 adjacent RuvB subunits; this complex drives branch migration. In the full resolvosome a probable DNA-RuvA(4)-RuvB(12)-RuvC(2) complex forms which resolves the HJ.</text>
</comment>
<comment type="subcellular location">
    <subcellularLocation>
        <location evidence="1">Cytoplasm</location>
    </subcellularLocation>
</comment>
<comment type="domain">
    <text evidence="1">Has three domains with a flexible linker between the domains II and III and assumes an 'L' shape. Domain III is highly mobile and contacts RuvB.</text>
</comment>
<comment type="similarity">
    <text evidence="1">Belongs to the RuvA family.</text>
</comment>
<evidence type="ECO:0000255" key="1">
    <source>
        <dbReference type="HAMAP-Rule" id="MF_00031"/>
    </source>
</evidence>
<proteinExistence type="inferred from homology"/>
<keyword id="KW-0963">Cytoplasm</keyword>
<keyword id="KW-0227">DNA damage</keyword>
<keyword id="KW-0233">DNA recombination</keyword>
<keyword id="KW-0234">DNA repair</keyword>
<keyword id="KW-0238">DNA-binding</keyword>
<accession>B2HWT2</accession>
<organism>
    <name type="scientific">Acinetobacter baumannii (strain ACICU)</name>
    <dbReference type="NCBI Taxonomy" id="405416"/>
    <lineage>
        <taxon>Bacteria</taxon>
        <taxon>Pseudomonadati</taxon>
        <taxon>Pseudomonadota</taxon>
        <taxon>Gammaproteobacteria</taxon>
        <taxon>Moraxellales</taxon>
        <taxon>Moraxellaceae</taxon>
        <taxon>Acinetobacter</taxon>
        <taxon>Acinetobacter calcoaceticus/baumannii complex</taxon>
    </lineage>
</organism>
<protein>
    <recommendedName>
        <fullName evidence="1">Holliday junction branch migration complex subunit RuvA</fullName>
    </recommendedName>
</protein>
<reference key="1">
    <citation type="journal article" date="2008" name="Antimicrob. Agents Chemother.">
        <title>Whole-genome pyrosequencing of an epidemic multidrug-resistant Acinetobacter baumannii strain belonging to the European clone II group.</title>
        <authorList>
            <person name="Iacono M."/>
            <person name="Villa L."/>
            <person name="Fortini D."/>
            <person name="Bordoni R."/>
            <person name="Imperi F."/>
            <person name="Bonnal R.J."/>
            <person name="Sicheritz-Ponten T."/>
            <person name="De Bellis G."/>
            <person name="Visca P."/>
            <person name="Cassone A."/>
            <person name="Carattoli A."/>
        </authorList>
    </citation>
    <scope>NUCLEOTIDE SEQUENCE [LARGE SCALE GENOMIC DNA]</scope>
    <source>
        <strain>ACICU</strain>
    </source>
</reference>
<gene>
    <name evidence="1" type="primary">ruvA</name>
    <name type="ordered locus">ACICU_02829</name>
</gene>
<sequence length="199" mass="21554">MIGCLIGEVFALEAPTVLLNVNGVGYEIDTPLSTFCQLQKGQKVTLWTHLVVREDAQQLYGFSDAQEKTIFRTLLKVNGVGPKMALGILSTLNVELLVHTIEHDDVNTLVKVPGVGKKTAERLMIELRDRFKTLAQGTSSAAALPQIQFVSNSPVAEAEAALQSLGYKPLEAQKAVAAVKADYTESADIIRAALKSMMK</sequence>
<feature type="chain" id="PRO_1000090270" description="Holliday junction branch migration complex subunit RuvA">
    <location>
        <begin position="1"/>
        <end position="199"/>
    </location>
</feature>
<feature type="region of interest" description="Domain I" evidence="1">
    <location>
        <begin position="1"/>
        <end position="63"/>
    </location>
</feature>
<feature type="region of interest" description="Domain II" evidence="1">
    <location>
        <begin position="64"/>
        <end position="142"/>
    </location>
</feature>
<feature type="region of interest" description="Flexible linker" evidence="1">
    <location>
        <begin position="143"/>
        <end position="150"/>
    </location>
</feature>
<feature type="region of interest" description="Domain III" evidence="1">
    <location>
        <begin position="150"/>
        <end position="199"/>
    </location>
</feature>
<name>RUVA_ACIBC</name>
<dbReference type="EMBL" id="CP000863">
    <property type="protein sequence ID" value="ACC58141.1"/>
    <property type="molecule type" value="Genomic_DNA"/>
</dbReference>
<dbReference type="RefSeq" id="WP_000578660.1">
    <property type="nucleotide sequence ID" value="NZ_CP031380.1"/>
</dbReference>
<dbReference type="SMR" id="B2HWT2"/>
<dbReference type="KEGG" id="abc:ACICU_02829"/>
<dbReference type="HOGENOM" id="CLU_087936_0_0_6"/>
<dbReference type="Proteomes" id="UP000008839">
    <property type="component" value="Chromosome"/>
</dbReference>
<dbReference type="GO" id="GO:0005737">
    <property type="term" value="C:cytoplasm"/>
    <property type="evidence" value="ECO:0007669"/>
    <property type="project" value="UniProtKB-SubCell"/>
</dbReference>
<dbReference type="GO" id="GO:0009379">
    <property type="term" value="C:Holliday junction helicase complex"/>
    <property type="evidence" value="ECO:0007669"/>
    <property type="project" value="InterPro"/>
</dbReference>
<dbReference type="GO" id="GO:0048476">
    <property type="term" value="C:Holliday junction resolvase complex"/>
    <property type="evidence" value="ECO:0007669"/>
    <property type="project" value="UniProtKB-UniRule"/>
</dbReference>
<dbReference type="GO" id="GO:0005524">
    <property type="term" value="F:ATP binding"/>
    <property type="evidence" value="ECO:0007669"/>
    <property type="project" value="InterPro"/>
</dbReference>
<dbReference type="GO" id="GO:0000400">
    <property type="term" value="F:four-way junction DNA binding"/>
    <property type="evidence" value="ECO:0007669"/>
    <property type="project" value="UniProtKB-UniRule"/>
</dbReference>
<dbReference type="GO" id="GO:0009378">
    <property type="term" value="F:four-way junction helicase activity"/>
    <property type="evidence" value="ECO:0007669"/>
    <property type="project" value="InterPro"/>
</dbReference>
<dbReference type="GO" id="GO:0006310">
    <property type="term" value="P:DNA recombination"/>
    <property type="evidence" value="ECO:0007669"/>
    <property type="project" value="UniProtKB-UniRule"/>
</dbReference>
<dbReference type="GO" id="GO:0006281">
    <property type="term" value="P:DNA repair"/>
    <property type="evidence" value="ECO:0007669"/>
    <property type="project" value="UniProtKB-UniRule"/>
</dbReference>
<dbReference type="Gene3D" id="1.10.150.20">
    <property type="entry name" value="5' to 3' exonuclease, C-terminal subdomain"/>
    <property type="match status" value="1"/>
</dbReference>
<dbReference type="Gene3D" id="1.10.8.10">
    <property type="entry name" value="DNA helicase RuvA subunit, C-terminal domain"/>
    <property type="match status" value="1"/>
</dbReference>
<dbReference type="Gene3D" id="2.40.50.140">
    <property type="entry name" value="Nucleic acid-binding proteins"/>
    <property type="match status" value="1"/>
</dbReference>
<dbReference type="HAMAP" id="MF_00031">
    <property type="entry name" value="DNA_HJ_migration_RuvA"/>
    <property type="match status" value="1"/>
</dbReference>
<dbReference type="InterPro" id="IPR013849">
    <property type="entry name" value="DNA_helicase_Holl-junc_RuvA_I"/>
</dbReference>
<dbReference type="InterPro" id="IPR003583">
    <property type="entry name" value="Hlx-hairpin-Hlx_DNA-bd_motif"/>
</dbReference>
<dbReference type="InterPro" id="IPR012340">
    <property type="entry name" value="NA-bd_OB-fold"/>
</dbReference>
<dbReference type="InterPro" id="IPR000085">
    <property type="entry name" value="RuvA"/>
</dbReference>
<dbReference type="InterPro" id="IPR010994">
    <property type="entry name" value="RuvA_2-like"/>
</dbReference>
<dbReference type="InterPro" id="IPR011114">
    <property type="entry name" value="RuvA_C"/>
</dbReference>
<dbReference type="InterPro" id="IPR036267">
    <property type="entry name" value="RuvA_C_sf"/>
</dbReference>
<dbReference type="NCBIfam" id="TIGR00084">
    <property type="entry name" value="ruvA"/>
    <property type="match status" value="1"/>
</dbReference>
<dbReference type="Pfam" id="PF14520">
    <property type="entry name" value="HHH_5"/>
    <property type="match status" value="1"/>
</dbReference>
<dbReference type="Pfam" id="PF07499">
    <property type="entry name" value="RuvA_C"/>
    <property type="match status" value="1"/>
</dbReference>
<dbReference type="Pfam" id="PF01330">
    <property type="entry name" value="RuvA_N"/>
    <property type="match status" value="1"/>
</dbReference>
<dbReference type="SMART" id="SM00278">
    <property type="entry name" value="HhH1"/>
    <property type="match status" value="2"/>
</dbReference>
<dbReference type="SUPFAM" id="SSF46929">
    <property type="entry name" value="DNA helicase RuvA subunit, C-terminal domain"/>
    <property type="match status" value="1"/>
</dbReference>
<dbReference type="SUPFAM" id="SSF50249">
    <property type="entry name" value="Nucleic acid-binding proteins"/>
    <property type="match status" value="1"/>
</dbReference>
<dbReference type="SUPFAM" id="SSF47781">
    <property type="entry name" value="RuvA domain 2-like"/>
    <property type="match status" value="1"/>
</dbReference>